<evidence type="ECO:0000255" key="1">
    <source>
        <dbReference type="HAMAP-Rule" id="MF_00084"/>
    </source>
</evidence>
<protein>
    <recommendedName>
        <fullName evidence="1">Nodulation protein A</fullName>
        <ecNumber evidence="1">2.3.1.-</ecNumber>
    </recommendedName>
</protein>
<dbReference type="EC" id="2.3.1.-" evidence="1"/>
<dbReference type="EMBL" id="AJ302678">
    <property type="protein sequence ID" value="CAC80541.1"/>
    <property type="molecule type" value="Genomic_DNA"/>
</dbReference>
<dbReference type="EMBL" id="AJ302680">
    <property type="protein sequence ID" value="CAC80543.1"/>
    <property type="molecule type" value="Genomic_DNA"/>
</dbReference>
<dbReference type="SMR" id="Q8VVH1"/>
<dbReference type="STRING" id="69974.MPLDJ20_20066"/>
<dbReference type="GO" id="GO:0005829">
    <property type="term" value="C:cytosol"/>
    <property type="evidence" value="ECO:0007669"/>
    <property type="project" value="InterPro"/>
</dbReference>
<dbReference type="GO" id="GO:0016746">
    <property type="term" value="F:acyltransferase activity"/>
    <property type="evidence" value="ECO:0007669"/>
    <property type="project" value="UniProtKB-UniRule"/>
</dbReference>
<dbReference type="Gene3D" id="3.40.630.30">
    <property type="match status" value="1"/>
</dbReference>
<dbReference type="HAMAP" id="MF_00084">
    <property type="entry name" value="NodA"/>
    <property type="match status" value="1"/>
</dbReference>
<dbReference type="InterPro" id="IPR003484">
    <property type="entry name" value="NodA"/>
</dbReference>
<dbReference type="InterPro" id="IPR020567">
    <property type="entry name" value="Nodulation_prot_NodA_CS"/>
</dbReference>
<dbReference type="NCBIfam" id="TIGR04245">
    <property type="entry name" value="nodulat_NodA"/>
    <property type="match status" value="1"/>
</dbReference>
<dbReference type="NCBIfam" id="NF001974">
    <property type="entry name" value="PRK00756.1"/>
    <property type="match status" value="1"/>
</dbReference>
<dbReference type="Pfam" id="PF02474">
    <property type="entry name" value="NodA"/>
    <property type="match status" value="1"/>
</dbReference>
<dbReference type="PROSITE" id="PS01349">
    <property type="entry name" value="NODA"/>
    <property type="match status" value="1"/>
</dbReference>
<accession>Q8VVH1</accession>
<accession>Q8VVH2</accession>
<keyword id="KW-0012">Acyltransferase</keyword>
<keyword id="KW-0963">Cytoplasm</keyword>
<keyword id="KW-0536">Nodulation</keyword>
<keyword id="KW-0808">Transferase</keyword>
<feature type="chain" id="PRO_0000196334" description="Nodulation protein A">
    <location>
        <begin position="1"/>
        <end position="196"/>
    </location>
</feature>
<feature type="sequence variant" description="In strain: ORS1096.">
    <original>R</original>
    <variation>K</variation>
    <location>
        <position position="8"/>
    </location>
</feature>
<feature type="sequence variant" description="In strain: ORS1096.">
    <original>Q</original>
    <variation>E</variation>
    <location>
        <position position="16"/>
    </location>
</feature>
<feature type="sequence variant" description="In strain: ORS1096.">
    <original>I</original>
    <variation>V</variation>
    <location>
        <position position="21"/>
    </location>
</feature>
<feature type="sequence variant" description="In strain: ORS1096.">
    <original>M</original>
    <variation>I</variation>
    <location>
        <position position="69"/>
    </location>
</feature>
<feature type="sequence variant" description="In strain: ORS1096.">
    <original>K</original>
    <variation>R</variation>
    <location>
        <position position="77"/>
    </location>
</feature>
<feature type="sequence variant" description="In strain: ORS1096.">
    <original>I</original>
    <variation>L</variation>
    <location>
        <position position="102"/>
    </location>
</feature>
<feature type="sequence variant" description="In strain: ORS1096.">
    <original>L</original>
    <variation>F</variation>
    <location>
        <position position="106"/>
    </location>
</feature>
<feature type="sequence variant" description="In strain: ORS1096.">
    <original>VR</original>
    <variation>LL</variation>
    <location>
        <begin position="109"/>
        <end position="110"/>
    </location>
</feature>
<feature type="sequence variant" description="In strain: ORS1096.">
    <original>Q</original>
    <variation>R</variation>
    <location>
        <position position="114"/>
    </location>
</feature>
<feature type="sequence variant" description="In strain: ORS1096.">
    <original>RD</original>
    <variation>HF</variation>
    <location>
        <begin position="155"/>
        <end position="156"/>
    </location>
</feature>
<feature type="sequence variant" description="In strain: ORS1096.">
    <original>L</original>
    <variation>V</variation>
    <location>
        <position position="174"/>
    </location>
</feature>
<name>NODA_MESPL</name>
<reference key="1">
    <citation type="submission" date="2000-11" db="EMBL/GenBank/DDBJ databases">
        <title>Symbiotic and taxonomic diversity of Acacia tortilis rhizobia.</title>
        <authorList>
            <person name="Ba S."/>
            <person name="Willems A."/>
            <person name="Lorquin J."/>
            <person name="Roche P."/>
            <person name="de Lajudie P."/>
            <person name="Neyra M."/>
            <person name="Moulin L."/>
            <person name="Gillis M."/>
            <person name="Dreyfus B."/>
            <person name="Boivin-Masson C."/>
        </authorList>
    </citation>
    <scope>NUCLEOTIDE SEQUENCE [GENOMIC DNA]</scope>
    <source>
        <strain>LMG 15298 / ORS 1096</strain>
        <strain>LMG 15320 / ORS 1255</strain>
    </source>
</reference>
<organism>
    <name type="scientific">Mesorhizobium plurifarium</name>
    <dbReference type="NCBI Taxonomy" id="69974"/>
    <lineage>
        <taxon>Bacteria</taxon>
        <taxon>Pseudomonadati</taxon>
        <taxon>Pseudomonadota</taxon>
        <taxon>Alphaproteobacteria</taxon>
        <taxon>Hyphomicrobiales</taxon>
        <taxon>Phyllobacteriaceae</taxon>
        <taxon>Mesorhizobium</taxon>
    </lineage>
</organism>
<gene>
    <name evidence="1" type="primary">nodA</name>
</gene>
<sequence>MRSQVRWRLCWENELQLSDHIELAEFFRRTYGPTGAFNAKPFEGSRSWAGARPEFRAIAYDSSGIAAHMGLLRRFIKIDGADLLVAELGLYGIRRDLEGLGISSSLRVVRPVLQELGVPFGFGTVRPALHKHVARLGRGGLLVVKSGIRVRSTLRDALLDKPPTRIDDALVVVLPVGRPISDWPAGEMIDRNGAEL</sequence>
<proteinExistence type="inferred from homology"/>
<comment type="function">
    <text evidence="1">N-acyltransferase required for nodulation. Acts in the production of a small, heat-stable compound (Nod) that stimulates mitosis in various plant protoplasts.</text>
</comment>
<comment type="subcellular location">
    <subcellularLocation>
        <location evidence="1">Cytoplasm</location>
    </subcellularLocation>
</comment>
<comment type="similarity">
    <text evidence="1">Belongs to the NodA family.</text>
</comment>